<organism>
    <name type="scientific">Influenza A virus (strain A/Equine/Prague/1/1956 H7N7)</name>
    <dbReference type="NCBI Taxonomy" id="380337"/>
    <lineage>
        <taxon>Viruses</taxon>
        <taxon>Riboviria</taxon>
        <taxon>Orthornavirae</taxon>
        <taxon>Negarnaviricota</taxon>
        <taxon>Polyploviricotina</taxon>
        <taxon>Insthoviricetes</taxon>
        <taxon>Articulavirales</taxon>
        <taxon>Orthomyxoviridae</taxon>
        <taxon>Alphainfluenzavirus</taxon>
        <taxon>Alphainfluenzavirus influenzae</taxon>
        <taxon>Influenza A virus</taxon>
    </lineage>
</organism>
<name>HEMA_I56A3</name>
<comment type="function">
    <text>Binds to sialic acid-containing receptors on the cell surface, bringing about the attachment of the virus particle to the cell. This attachment induces virion internalization of about two third of the virus particles through clathrin-dependent endocytosis and about one third through a clathrin- and caveolin-independent pathway. Plays a major role in the determination of host range restriction and virulence. Class I viral fusion protein. Responsible for penetration of the virus into the cell cytoplasm by mediating the fusion of the membrane of the endocytosed virus particle with the endosomal membrane. Low pH in endosomes induces an irreversible conformational change in HA2, releasing the fusion hydrophobic peptide. Several trimers are required to form a competent fusion pore.</text>
</comment>
<comment type="function">
    <text evidence="1">Binds to sialic acid-containing receptors on the cell surface, bringing about the attachment of the virus particle to the cell. This attachment induces virion internalization either through clathrin-dependent endocytosis or through clathrin- and caveolin-independent pathway. Plays a major role in the determination of host range restriction and virulence. Class I viral fusion protein. Responsible for penetration of the virus into the cell cytoplasm by mediating the fusion of the membrane of the endocytosed virus particle with the endosomal membrane. Low pH in endosomes induces an irreversible conformational change in HA2, releasing the fusion hydrophobic peptide. Several trimers are required to form a competent fusion pore.</text>
</comment>
<comment type="subunit">
    <text evidence="1">Homotrimer of disulfide-linked HA1-HA2.</text>
</comment>
<comment type="subcellular location">
    <subcellularLocation>
        <location evidence="1">Virion membrane</location>
        <topology evidence="1">Single-pass type I membrane protein</topology>
    </subcellularLocation>
    <subcellularLocation>
        <location evidence="1">Host apical cell membrane</location>
        <topology evidence="1">Single-pass type I membrane protein</topology>
    </subcellularLocation>
    <text evidence="1">Targeted to the apical plasma membrane in epithelial polarized cells through a signal present in the transmembrane domain. Associated with glycosphingolipid- and cholesterol-enriched detergent-resistant lipid rafts.</text>
</comment>
<comment type="PTM">
    <text evidence="1">Palmitoylated.</text>
</comment>
<comment type="PTM">
    <text evidence="1">In natural infection, inactive HA is matured into HA1 and HA2 outside the cell by one or more trypsin-like, arginine-specific endoprotease secreted by the bronchial epithelial cells. One identified protease that may be involved in this process is secreted in lungs by club cells.</text>
</comment>
<comment type="miscellaneous">
    <text>Major glycoprotein, comprises over 80% of the envelope proteins present in virus particle.</text>
</comment>
<comment type="miscellaneous">
    <text>The extent of infection into host organism is determined by HA. Influenza viruses bud from the apical surface of polarized epithelial cells (e.g. bronchial epithelial cells) into lumen of lungs and are therefore usually pneumotropic. The reason is that HA is cleaved by tryptase clara which is restricted to lungs. However, HAs of H5 and H7 pantropic avian viruses subtypes can be cleaved by furin and subtilisin-type enzymes, allowing the virus to grow in other organs than lungs.</text>
</comment>
<comment type="miscellaneous">
    <text evidence="2">The influenza A genome consist of 8 RNA segments. Genetic variation of hemagglutinin and/or neuraminidase genes results in the emergence of new influenza strains. The mechanism of variation can be the result of point mutations or the result of genetic reassortment between segments of two different strains.</text>
</comment>
<comment type="similarity">
    <text evidence="1">Belongs to the influenza viruses hemagglutinin family.</text>
</comment>
<reference key="1">
    <citation type="journal article" date="1992" name="Virus Res.">
        <title>Sequence analysis of the equine H7 influenza virus haemagglutinin gene.</title>
        <authorList>
            <person name="Gibson C.A."/>
            <person name="Daniels R.S."/>
            <person name="Oxford J.S."/>
            <person name="McCauley J.W."/>
        </authorList>
    </citation>
    <scope>NUCLEOTIDE SEQUENCE [GENOMIC RNA]</scope>
</reference>
<protein>
    <recommendedName>
        <fullName evidence="1">Hemagglutinin</fullName>
    </recommendedName>
    <component>
        <recommendedName>
            <fullName evidence="1">Hemagglutinin HA1 chain</fullName>
        </recommendedName>
    </component>
    <component>
        <recommendedName>
            <fullName evidence="1">Hemagglutinin HA2 chain</fullName>
        </recommendedName>
    </component>
</protein>
<gene>
    <name evidence="1" type="primary">HA</name>
</gene>
<proteinExistence type="inferred from homology"/>
<keyword id="KW-1167">Clathrin- and caveolin-independent endocytosis of virus by host</keyword>
<keyword id="KW-1165">Clathrin-mediated endocytosis of virus by host</keyword>
<keyword id="KW-1015">Disulfide bond</keyword>
<keyword id="KW-1170">Fusion of virus membrane with host endosomal membrane</keyword>
<keyword id="KW-1168">Fusion of virus membrane with host membrane</keyword>
<keyword id="KW-0325">Glycoprotein</keyword>
<keyword id="KW-0348">Hemagglutinin</keyword>
<keyword id="KW-1032">Host cell membrane</keyword>
<keyword id="KW-1043">Host membrane</keyword>
<keyword id="KW-0945">Host-virus interaction</keyword>
<keyword id="KW-0449">Lipoprotein</keyword>
<keyword id="KW-0472">Membrane</keyword>
<keyword id="KW-0564">Palmitate</keyword>
<keyword id="KW-0732">Signal</keyword>
<keyword id="KW-0812">Transmembrane</keyword>
<keyword id="KW-1133">Transmembrane helix</keyword>
<keyword id="KW-1161">Viral attachment to host cell</keyword>
<keyword id="KW-0261">Viral envelope protein</keyword>
<keyword id="KW-1162">Viral penetration into host cytoplasm</keyword>
<keyword id="KW-0946">Virion</keyword>
<keyword id="KW-1164">Virus endocytosis by host</keyword>
<keyword id="KW-1160">Virus entry into host cell</keyword>
<organismHost>
    <name type="scientific">Aves</name>
    <dbReference type="NCBI Taxonomy" id="8782"/>
</organismHost>
<organismHost>
    <name type="scientific">Equus caballus</name>
    <name type="common">Horse</name>
    <dbReference type="NCBI Taxonomy" id="9796"/>
</organismHost>
<organismHost>
    <name type="scientific">Homo sapiens</name>
    <name type="common">Human</name>
    <dbReference type="NCBI Taxonomy" id="9606"/>
</organismHost>
<organismHost>
    <name type="scientific">Phocidae</name>
    <name type="common">true seals</name>
    <dbReference type="NCBI Taxonomy" id="9709"/>
</organismHost>
<evidence type="ECO:0000255" key="1">
    <source>
        <dbReference type="HAMAP-Rule" id="MF_04072"/>
    </source>
</evidence>
<evidence type="ECO:0000305" key="2"/>
<dbReference type="EMBL" id="X62552">
    <property type="protein sequence ID" value="CAA44429.1"/>
    <property type="molecule type" value="Genomic_RNA"/>
</dbReference>
<dbReference type="SMR" id="P26101"/>
<dbReference type="GlyCosmos" id="P26101">
    <property type="glycosylation" value="6 sites, No reported glycans"/>
</dbReference>
<dbReference type="GO" id="GO:0020002">
    <property type="term" value="C:host cell plasma membrane"/>
    <property type="evidence" value="ECO:0007669"/>
    <property type="project" value="UniProtKB-SubCell"/>
</dbReference>
<dbReference type="GO" id="GO:0016020">
    <property type="term" value="C:membrane"/>
    <property type="evidence" value="ECO:0007669"/>
    <property type="project" value="UniProtKB-UniRule"/>
</dbReference>
<dbReference type="GO" id="GO:0019031">
    <property type="term" value="C:viral envelope"/>
    <property type="evidence" value="ECO:0007669"/>
    <property type="project" value="UniProtKB-UniRule"/>
</dbReference>
<dbReference type="GO" id="GO:0055036">
    <property type="term" value="C:virion membrane"/>
    <property type="evidence" value="ECO:0007669"/>
    <property type="project" value="UniProtKB-SubCell"/>
</dbReference>
<dbReference type="GO" id="GO:0046789">
    <property type="term" value="F:host cell surface receptor binding"/>
    <property type="evidence" value="ECO:0007669"/>
    <property type="project" value="UniProtKB-UniRule"/>
</dbReference>
<dbReference type="GO" id="GO:0075512">
    <property type="term" value="P:clathrin-dependent endocytosis of virus by host cell"/>
    <property type="evidence" value="ECO:0007669"/>
    <property type="project" value="UniProtKB-UniRule"/>
</dbReference>
<dbReference type="GO" id="GO:0039654">
    <property type="term" value="P:fusion of virus membrane with host endosome membrane"/>
    <property type="evidence" value="ECO:0007669"/>
    <property type="project" value="UniProtKB-UniRule"/>
</dbReference>
<dbReference type="GO" id="GO:0019064">
    <property type="term" value="P:fusion of virus membrane with host plasma membrane"/>
    <property type="evidence" value="ECO:0007669"/>
    <property type="project" value="InterPro"/>
</dbReference>
<dbReference type="GO" id="GO:0046761">
    <property type="term" value="P:viral budding from plasma membrane"/>
    <property type="evidence" value="ECO:0007669"/>
    <property type="project" value="UniProtKB-UniRule"/>
</dbReference>
<dbReference type="GO" id="GO:0019062">
    <property type="term" value="P:virion attachment to host cell"/>
    <property type="evidence" value="ECO:0007669"/>
    <property type="project" value="UniProtKB-KW"/>
</dbReference>
<dbReference type="Gene3D" id="3.90.20.10">
    <property type="match status" value="1"/>
</dbReference>
<dbReference type="Gene3D" id="3.90.209.20">
    <property type="match status" value="1"/>
</dbReference>
<dbReference type="HAMAP" id="MF_04072">
    <property type="entry name" value="INFV_HEMA"/>
    <property type="match status" value="1"/>
</dbReference>
<dbReference type="InterPro" id="IPR008980">
    <property type="entry name" value="Capsid_hemagglutn"/>
</dbReference>
<dbReference type="InterPro" id="IPR013828">
    <property type="entry name" value="Hemagglutn_HA1_a/b_dom_sf"/>
</dbReference>
<dbReference type="InterPro" id="IPR000149">
    <property type="entry name" value="Hemagglutn_influenz_A"/>
</dbReference>
<dbReference type="InterPro" id="IPR001364">
    <property type="entry name" value="Hemagglutn_influenz_A/B"/>
</dbReference>
<dbReference type="Pfam" id="PF00509">
    <property type="entry name" value="Hemagglutinin"/>
    <property type="match status" value="1"/>
</dbReference>
<dbReference type="PRINTS" id="PR00330">
    <property type="entry name" value="HEMAGGLUTN1"/>
</dbReference>
<dbReference type="PRINTS" id="PR00329">
    <property type="entry name" value="HEMAGGLUTN12"/>
</dbReference>
<dbReference type="SUPFAM" id="SSF58064">
    <property type="entry name" value="Influenza hemagglutinin (stalk)"/>
    <property type="match status" value="1"/>
</dbReference>
<dbReference type="SUPFAM" id="SSF49818">
    <property type="entry name" value="Viral protein domain"/>
    <property type="match status" value="1"/>
</dbReference>
<sequence>MNTQILILATSAFFYVRADKICLGHHAVSNGTKVDTLTEKGIEVVNATETVEQTNIPKICSKGKQTVDLGQCGLLGTVIGPPQCDQFLEFSANLIVERREGNDICYPGKFDNEETLRKILRKSGGIKKENMGFTYTGVRTNGETSACRRSRSSFYAEMKWLLSSTDNGTFPQMTKSYKNTKKVPALIIWGIHHSGSTTEQTRLYGSGNKLITVWSSKYQQSFVPNPGPRPQMNGQSGRIDFHWLMLDPNDTVTFSFNGAFIAPDRASFLRGKSLGIQSDAQLDNNCEGECYHIGGTIISNLPFQNINSRAIGKCPRYVKQKSLMLATGMKNVPEAPAHKQLTHHMRKKRGLFGAIAGFIENGWEGLIDGWYGYKHQNAQGEGTAADYKSTQSAINQITGKLNRLIEKTNQQFELIDNEFNEIEKQIGNVINWTRDSIIEVWSYNAEFLVAVENQHTIDLTDSEMNKLYEKVRRQLRENAEEDGNGCFEIFHQCDNDCMASIRNNTYDHKKYRKEAIQNRIQIDAVKLSSGYKDIILWFSFGASCFLFLAIAMGLVFICIKNGNMRCTICI</sequence>
<feature type="signal peptide" evidence="1">
    <location>
        <begin position="1"/>
        <end position="18"/>
    </location>
</feature>
<feature type="chain" id="PRO_0000440391" description="Hemagglutinin" evidence="1">
    <location>
        <begin position="19"/>
        <end position="570"/>
    </location>
</feature>
<feature type="chain" id="PRO_0000038992" description="Hemagglutinin HA1 chain" evidence="1">
    <location>
        <begin position="19"/>
        <end position="348"/>
    </location>
</feature>
<feature type="chain" id="PRO_0000038993" description="Hemagglutinin HA2 chain" evidence="1">
    <location>
        <begin position="350"/>
        <end position="570"/>
    </location>
</feature>
<feature type="topological domain" description="Extracellular" evidence="1">
    <location>
        <begin position="19"/>
        <end position="533"/>
    </location>
</feature>
<feature type="transmembrane region" description="Helical" evidence="1">
    <location>
        <begin position="534"/>
        <end position="554"/>
    </location>
</feature>
<feature type="topological domain" description="Cytoplasmic" evidence="1">
    <location>
        <begin position="555"/>
        <end position="570"/>
    </location>
</feature>
<feature type="site" description="Cleavage; by host" evidence="1">
    <location>
        <begin position="349"/>
        <end position="350"/>
    </location>
</feature>
<feature type="lipid moiety-binding region" description="S-palmitoyl cysteine; by host" evidence="1">
    <location>
        <position position="566"/>
    </location>
</feature>
<feature type="lipid moiety-binding region" description="S-palmitoyl cysteine; by host" evidence="1">
    <location>
        <position position="569"/>
    </location>
</feature>
<feature type="glycosylation site" description="N-linked (GlcNAc...) asparagine; by host" evidence="1">
    <location>
        <position position="30"/>
    </location>
</feature>
<feature type="glycosylation site" description="N-linked (GlcNAc...) asparagine; by host" evidence="1">
    <location>
        <position position="46"/>
    </location>
</feature>
<feature type="glycosylation site" description="N-linked (GlcNAc...) asparagine; by host" evidence="1">
    <location>
        <position position="167"/>
    </location>
</feature>
<feature type="glycosylation site" description="N-linked (GlcNAc...) asparagine; by host" evidence="1">
    <location>
        <position position="249"/>
    </location>
</feature>
<feature type="glycosylation site" description="N-linked (GlcNAc...) asparagine; by host" evidence="1">
    <location>
        <position position="431"/>
    </location>
</feature>
<feature type="glycosylation site" description="N-linked (GlcNAc...) asparagine; by host" evidence="1">
    <location>
        <position position="503"/>
    </location>
</feature>
<feature type="disulfide bond" description="Interchain (between HA1 and HA2 chains)" evidence="1">
    <location>
        <begin position="22"/>
        <end position="486"/>
    </location>
</feature>
<feature type="disulfide bond" evidence="1">
    <location>
        <begin position="60"/>
        <end position="286"/>
    </location>
</feature>
<feature type="disulfide bond" evidence="1">
    <location>
        <begin position="72"/>
        <end position="84"/>
    </location>
</feature>
<feature type="disulfide bond" evidence="1">
    <location>
        <begin position="105"/>
        <end position="147"/>
    </location>
</feature>
<feature type="disulfide bond" evidence="1">
    <location>
        <begin position="290"/>
        <end position="314"/>
    </location>
</feature>
<feature type="disulfide bond" evidence="1">
    <location>
        <begin position="493"/>
        <end position="497"/>
    </location>
</feature>
<accession>P26101</accession>